<evidence type="ECO:0000250" key="1"/>
<evidence type="ECO:0000255" key="2">
    <source>
        <dbReference type="HAMAP-Rule" id="MF_01057"/>
    </source>
</evidence>
<protein>
    <recommendedName>
        <fullName evidence="2">tRNA (guanine-N(7)-)-methyltransferase</fullName>
        <ecNumber evidence="2">2.1.1.33</ecNumber>
    </recommendedName>
    <alternativeName>
        <fullName evidence="2">tRNA (guanine(46)-N(7))-methyltransferase</fullName>
    </alternativeName>
    <alternativeName>
        <fullName evidence="2">tRNA(m7G46)-methyltransferase</fullName>
    </alternativeName>
</protein>
<accession>Q9PQM2</accession>
<comment type="function">
    <text evidence="2">Catalyzes the formation of N(7)-methylguanine at position 46 (m7G46) in tRNA.</text>
</comment>
<comment type="catalytic activity">
    <reaction evidence="2">
        <text>guanosine(46) in tRNA + S-adenosyl-L-methionine = N(7)-methylguanosine(46) in tRNA + S-adenosyl-L-homocysteine</text>
        <dbReference type="Rhea" id="RHEA:42708"/>
        <dbReference type="Rhea" id="RHEA-COMP:10188"/>
        <dbReference type="Rhea" id="RHEA-COMP:10189"/>
        <dbReference type="ChEBI" id="CHEBI:57856"/>
        <dbReference type="ChEBI" id="CHEBI:59789"/>
        <dbReference type="ChEBI" id="CHEBI:74269"/>
        <dbReference type="ChEBI" id="CHEBI:74480"/>
        <dbReference type="EC" id="2.1.1.33"/>
    </reaction>
</comment>
<comment type="pathway">
    <text evidence="2">tRNA modification; N(7)-methylguanine-tRNA biosynthesis.</text>
</comment>
<comment type="similarity">
    <text evidence="2">Belongs to the class I-like SAM-binding methyltransferase superfamily. TrmB family.</text>
</comment>
<reference key="1">
    <citation type="journal article" date="2000" name="Nature">
        <title>The complete sequence of the mucosal pathogen Ureaplasma urealyticum.</title>
        <authorList>
            <person name="Glass J.I."/>
            <person name="Lefkowitz E.J."/>
            <person name="Glass J.S."/>
            <person name="Heiner C.R."/>
            <person name="Chen E.Y."/>
            <person name="Cassell G.H."/>
        </authorList>
    </citation>
    <scope>NUCLEOTIDE SEQUENCE [LARGE SCALE GENOMIC DNA]</scope>
    <source>
        <strain>ATCC 700970</strain>
    </source>
</reference>
<organism>
    <name type="scientific">Ureaplasma parvum serovar 3 (strain ATCC 700970)</name>
    <dbReference type="NCBI Taxonomy" id="273119"/>
    <lineage>
        <taxon>Bacteria</taxon>
        <taxon>Bacillati</taxon>
        <taxon>Mycoplasmatota</taxon>
        <taxon>Mycoplasmoidales</taxon>
        <taxon>Mycoplasmoidaceae</taxon>
        <taxon>Ureaplasma</taxon>
    </lineage>
</organism>
<keyword id="KW-0489">Methyltransferase</keyword>
<keyword id="KW-1185">Reference proteome</keyword>
<keyword id="KW-0949">S-adenosyl-L-methionine</keyword>
<keyword id="KW-0808">Transferase</keyword>
<keyword id="KW-0819">tRNA processing</keyword>
<name>TRMB_UREPA</name>
<dbReference type="EC" id="2.1.1.33" evidence="2"/>
<dbReference type="EMBL" id="AF222894">
    <property type="protein sequence ID" value="AAF30678.1"/>
    <property type="molecule type" value="Genomic_DNA"/>
</dbReference>
<dbReference type="RefSeq" id="WP_006688874.1">
    <property type="nucleotide sequence ID" value="NC_002162.1"/>
</dbReference>
<dbReference type="SMR" id="Q9PQM2"/>
<dbReference type="STRING" id="273119.UU269"/>
<dbReference type="EnsemblBacteria" id="AAF30678">
    <property type="protein sequence ID" value="AAF30678"/>
    <property type="gene ID" value="UU269"/>
</dbReference>
<dbReference type="GeneID" id="29672514"/>
<dbReference type="KEGG" id="uur:UU269"/>
<dbReference type="eggNOG" id="COG0220">
    <property type="taxonomic scope" value="Bacteria"/>
</dbReference>
<dbReference type="HOGENOM" id="CLU_050910_2_1_14"/>
<dbReference type="OrthoDB" id="9802090at2"/>
<dbReference type="UniPathway" id="UPA00989"/>
<dbReference type="Proteomes" id="UP000000423">
    <property type="component" value="Chromosome"/>
</dbReference>
<dbReference type="GO" id="GO:0043527">
    <property type="term" value="C:tRNA methyltransferase complex"/>
    <property type="evidence" value="ECO:0007669"/>
    <property type="project" value="TreeGrafter"/>
</dbReference>
<dbReference type="GO" id="GO:0008176">
    <property type="term" value="F:tRNA (guanine(46)-N7)-methyltransferase activity"/>
    <property type="evidence" value="ECO:0007669"/>
    <property type="project" value="UniProtKB-UniRule"/>
</dbReference>
<dbReference type="Gene3D" id="3.40.50.150">
    <property type="entry name" value="Vaccinia Virus protein VP39"/>
    <property type="match status" value="1"/>
</dbReference>
<dbReference type="HAMAP" id="MF_01057">
    <property type="entry name" value="tRNA_methyltr_TrmB"/>
    <property type="match status" value="1"/>
</dbReference>
<dbReference type="InterPro" id="IPR029063">
    <property type="entry name" value="SAM-dependent_MTases_sf"/>
</dbReference>
<dbReference type="InterPro" id="IPR003358">
    <property type="entry name" value="tRNA_(Gua-N-7)_MeTrfase_Trmb"/>
</dbReference>
<dbReference type="InterPro" id="IPR055361">
    <property type="entry name" value="tRNA_methyltr_TrmB_bact"/>
</dbReference>
<dbReference type="NCBIfam" id="NF001080">
    <property type="entry name" value="PRK00121.2-2"/>
    <property type="match status" value="1"/>
</dbReference>
<dbReference type="NCBIfam" id="TIGR00091">
    <property type="entry name" value="tRNA (guanosine(46)-N7)-methyltransferase TrmB"/>
    <property type="match status" value="1"/>
</dbReference>
<dbReference type="PANTHER" id="PTHR23417">
    <property type="entry name" value="3-DEOXY-D-MANNO-OCTULOSONIC-ACID TRANSFERASE/TRNA GUANINE-N 7 - -METHYLTRANSFERASE"/>
    <property type="match status" value="1"/>
</dbReference>
<dbReference type="PANTHER" id="PTHR23417:SF14">
    <property type="entry name" value="PENTACOTRIPEPTIDE-REPEAT REGION OF PRORP DOMAIN-CONTAINING PROTEIN"/>
    <property type="match status" value="1"/>
</dbReference>
<dbReference type="Pfam" id="PF02390">
    <property type="entry name" value="Methyltransf_4"/>
    <property type="match status" value="1"/>
</dbReference>
<dbReference type="SUPFAM" id="SSF53335">
    <property type="entry name" value="S-adenosyl-L-methionine-dependent methyltransferases"/>
    <property type="match status" value="1"/>
</dbReference>
<dbReference type="PROSITE" id="PS51625">
    <property type="entry name" value="SAM_MT_TRMB"/>
    <property type="match status" value="1"/>
</dbReference>
<proteinExistence type="inferred from homology"/>
<sequence>MRLRNNANAPLYLKSQHEYIINDPHLLKDNLGKIFKNPELPLYIEIGMGKGDFIIENALRNQQINYLGIEKFPTVIVKAHKKALKHKLDNLAMICFDANKILELLNSESVDKIYLNFSDPWPKKRHAKKRLTHPCFLEKFAVILKQNALVEFKTDNENLFMYTIYDVLLKDLTKYEILFLTYNLYTLVNNVELLKNIPTEYEKKFVMQGERIKKVNFRFLKNNQ</sequence>
<gene>
    <name evidence="2" type="primary">trmB</name>
    <name type="ordered locus">UU269</name>
</gene>
<feature type="chain" id="PRO_0000171417" description="tRNA (guanine-N(7)-)-methyltransferase">
    <location>
        <begin position="1"/>
        <end position="224"/>
    </location>
</feature>
<feature type="active site" evidence="1">
    <location>
        <position position="119"/>
    </location>
</feature>
<feature type="binding site" evidence="2">
    <location>
        <position position="45"/>
    </location>
    <ligand>
        <name>S-adenosyl-L-methionine</name>
        <dbReference type="ChEBI" id="CHEBI:59789"/>
    </ligand>
</feature>
<feature type="binding site" evidence="2">
    <location>
        <position position="70"/>
    </location>
    <ligand>
        <name>S-adenosyl-L-methionine</name>
        <dbReference type="ChEBI" id="CHEBI:59789"/>
    </ligand>
</feature>
<feature type="binding site" evidence="2">
    <location>
        <position position="97"/>
    </location>
    <ligand>
        <name>S-adenosyl-L-methionine</name>
        <dbReference type="ChEBI" id="CHEBI:59789"/>
    </ligand>
</feature>
<feature type="binding site" evidence="2">
    <location>
        <position position="119"/>
    </location>
    <ligand>
        <name>S-adenosyl-L-methionine</name>
        <dbReference type="ChEBI" id="CHEBI:59789"/>
    </ligand>
</feature>
<feature type="binding site" evidence="2">
    <location>
        <position position="123"/>
    </location>
    <ligand>
        <name>substrate</name>
    </ligand>
</feature>
<feature type="binding site" evidence="2">
    <location>
        <position position="155"/>
    </location>
    <ligand>
        <name>substrate</name>
    </ligand>
</feature>
<feature type="binding site" evidence="2">
    <location>
        <begin position="199"/>
        <end position="202"/>
    </location>
    <ligand>
        <name>substrate</name>
    </ligand>
</feature>